<organism>
    <name type="scientific">Shewanella amazonensis (strain ATCC BAA-1098 / SB2B)</name>
    <dbReference type="NCBI Taxonomy" id="326297"/>
    <lineage>
        <taxon>Bacteria</taxon>
        <taxon>Pseudomonadati</taxon>
        <taxon>Pseudomonadota</taxon>
        <taxon>Gammaproteobacteria</taxon>
        <taxon>Alteromonadales</taxon>
        <taxon>Shewanellaceae</taxon>
        <taxon>Shewanella</taxon>
    </lineage>
</organism>
<gene>
    <name evidence="1" type="primary">rbfA</name>
    <name type="ordered locus">Sama_0962</name>
</gene>
<dbReference type="EMBL" id="CP000507">
    <property type="protein sequence ID" value="ABL99169.1"/>
    <property type="molecule type" value="Genomic_DNA"/>
</dbReference>
<dbReference type="RefSeq" id="WP_011759078.1">
    <property type="nucleotide sequence ID" value="NC_008700.1"/>
</dbReference>
<dbReference type="SMR" id="A1S463"/>
<dbReference type="STRING" id="326297.Sama_0962"/>
<dbReference type="KEGG" id="saz:Sama_0962"/>
<dbReference type="eggNOG" id="COG0858">
    <property type="taxonomic scope" value="Bacteria"/>
</dbReference>
<dbReference type="HOGENOM" id="CLU_089475_5_0_6"/>
<dbReference type="OrthoDB" id="307788at2"/>
<dbReference type="Proteomes" id="UP000009175">
    <property type="component" value="Chromosome"/>
</dbReference>
<dbReference type="GO" id="GO:0005829">
    <property type="term" value="C:cytosol"/>
    <property type="evidence" value="ECO:0007669"/>
    <property type="project" value="TreeGrafter"/>
</dbReference>
<dbReference type="GO" id="GO:0043024">
    <property type="term" value="F:ribosomal small subunit binding"/>
    <property type="evidence" value="ECO:0007669"/>
    <property type="project" value="TreeGrafter"/>
</dbReference>
<dbReference type="GO" id="GO:0030490">
    <property type="term" value="P:maturation of SSU-rRNA"/>
    <property type="evidence" value="ECO:0007669"/>
    <property type="project" value="UniProtKB-UniRule"/>
</dbReference>
<dbReference type="FunFam" id="3.30.300.20:FF:000007">
    <property type="entry name" value="Ribosome-binding factor A"/>
    <property type="match status" value="1"/>
</dbReference>
<dbReference type="Gene3D" id="3.30.300.20">
    <property type="match status" value="1"/>
</dbReference>
<dbReference type="HAMAP" id="MF_00003">
    <property type="entry name" value="RbfA"/>
    <property type="match status" value="1"/>
</dbReference>
<dbReference type="InterPro" id="IPR015946">
    <property type="entry name" value="KH_dom-like_a/b"/>
</dbReference>
<dbReference type="InterPro" id="IPR000238">
    <property type="entry name" value="RbfA"/>
</dbReference>
<dbReference type="InterPro" id="IPR023799">
    <property type="entry name" value="RbfA_dom_sf"/>
</dbReference>
<dbReference type="NCBIfam" id="TIGR00082">
    <property type="entry name" value="rbfA"/>
    <property type="match status" value="1"/>
</dbReference>
<dbReference type="PANTHER" id="PTHR33515">
    <property type="entry name" value="RIBOSOME-BINDING FACTOR A, CHLOROPLASTIC-RELATED"/>
    <property type="match status" value="1"/>
</dbReference>
<dbReference type="PANTHER" id="PTHR33515:SF1">
    <property type="entry name" value="RIBOSOME-BINDING FACTOR A, CHLOROPLASTIC-RELATED"/>
    <property type="match status" value="1"/>
</dbReference>
<dbReference type="Pfam" id="PF02033">
    <property type="entry name" value="RBFA"/>
    <property type="match status" value="1"/>
</dbReference>
<dbReference type="SUPFAM" id="SSF89919">
    <property type="entry name" value="Ribosome-binding factor A, RbfA"/>
    <property type="match status" value="1"/>
</dbReference>
<accession>A1S463</accession>
<comment type="function">
    <text evidence="1">One of several proteins that assist in the late maturation steps of the functional core of the 30S ribosomal subunit. Associates with free 30S ribosomal subunits (but not with 30S subunits that are part of 70S ribosomes or polysomes). Required for efficient processing of 16S rRNA. May interact with the 5'-terminal helix region of 16S rRNA.</text>
</comment>
<comment type="subunit">
    <text evidence="1">Monomer. Binds 30S ribosomal subunits, but not 50S ribosomal subunits or 70S ribosomes.</text>
</comment>
<comment type="subcellular location">
    <subcellularLocation>
        <location evidence="1">Cytoplasm</location>
    </subcellularLocation>
</comment>
<comment type="similarity">
    <text evidence="1">Belongs to the RbfA family.</text>
</comment>
<name>RBFA_SHEAM</name>
<keyword id="KW-0963">Cytoplasm</keyword>
<keyword id="KW-1185">Reference proteome</keyword>
<keyword id="KW-0690">Ribosome biogenesis</keyword>
<protein>
    <recommendedName>
        <fullName evidence="1">Ribosome-binding factor A</fullName>
    </recommendedName>
</protein>
<sequence>MAREFSRTRRIGQQLQQELAFVLQRDMKDPRIGMVTVNDVDVSRDLSHAKVYVTFFEEDPQVIEAKLAALNTAAPYARTLVAGRMKLRVMPELRFIYDASLVEGMRMSNLVSKVIRDDEAKKGHIGDEPQEGQREED</sequence>
<proteinExistence type="inferred from homology"/>
<reference key="1">
    <citation type="submission" date="2006-12" db="EMBL/GenBank/DDBJ databases">
        <title>Complete sequence of Shewanella amazonensis SB2B.</title>
        <authorList>
            <consortium name="US DOE Joint Genome Institute"/>
            <person name="Copeland A."/>
            <person name="Lucas S."/>
            <person name="Lapidus A."/>
            <person name="Barry K."/>
            <person name="Detter J.C."/>
            <person name="Glavina del Rio T."/>
            <person name="Hammon N."/>
            <person name="Israni S."/>
            <person name="Dalin E."/>
            <person name="Tice H."/>
            <person name="Pitluck S."/>
            <person name="Munk A.C."/>
            <person name="Brettin T."/>
            <person name="Bruce D."/>
            <person name="Han C."/>
            <person name="Tapia R."/>
            <person name="Gilna P."/>
            <person name="Schmutz J."/>
            <person name="Larimer F."/>
            <person name="Land M."/>
            <person name="Hauser L."/>
            <person name="Kyrpides N."/>
            <person name="Mikhailova N."/>
            <person name="Fredrickson J."/>
            <person name="Richardson P."/>
        </authorList>
    </citation>
    <scope>NUCLEOTIDE SEQUENCE [LARGE SCALE GENOMIC DNA]</scope>
    <source>
        <strain>ATCC BAA-1098 / SB2B</strain>
    </source>
</reference>
<evidence type="ECO:0000255" key="1">
    <source>
        <dbReference type="HAMAP-Rule" id="MF_00003"/>
    </source>
</evidence>
<feature type="chain" id="PRO_1000000200" description="Ribosome-binding factor A">
    <location>
        <begin position="1"/>
        <end position="137"/>
    </location>
</feature>